<proteinExistence type="predicted"/>
<sequence length="116" mass="13283">MIQVYKYDENFMFVEPLVVTEIDEKGDYIFPDNCTSVPLPDSPSYYLPRFDLSKQVWIETASQEYIDSLSPPPEEPSDVELLGQSLAEARILILKQNRIILNLQNEVKNLKDGTTA</sequence>
<reference key="1">
    <citation type="journal article" date="1997" name="Nature">
        <title>The complete genome sequence of the Gram-positive bacterium Bacillus subtilis.</title>
        <authorList>
            <person name="Kunst F."/>
            <person name="Ogasawara N."/>
            <person name="Moszer I."/>
            <person name="Albertini A.M."/>
            <person name="Alloni G."/>
            <person name="Azevedo V."/>
            <person name="Bertero M.G."/>
            <person name="Bessieres P."/>
            <person name="Bolotin A."/>
            <person name="Borchert S."/>
            <person name="Borriss R."/>
            <person name="Boursier L."/>
            <person name="Brans A."/>
            <person name="Braun M."/>
            <person name="Brignell S.C."/>
            <person name="Bron S."/>
            <person name="Brouillet S."/>
            <person name="Bruschi C.V."/>
            <person name="Caldwell B."/>
            <person name="Capuano V."/>
            <person name="Carter N.M."/>
            <person name="Choi S.-K."/>
            <person name="Codani J.-J."/>
            <person name="Connerton I.F."/>
            <person name="Cummings N.J."/>
            <person name="Daniel R.A."/>
            <person name="Denizot F."/>
            <person name="Devine K.M."/>
            <person name="Duesterhoeft A."/>
            <person name="Ehrlich S.D."/>
            <person name="Emmerson P.T."/>
            <person name="Entian K.-D."/>
            <person name="Errington J."/>
            <person name="Fabret C."/>
            <person name="Ferrari E."/>
            <person name="Foulger D."/>
            <person name="Fritz C."/>
            <person name="Fujita M."/>
            <person name="Fujita Y."/>
            <person name="Fuma S."/>
            <person name="Galizzi A."/>
            <person name="Galleron N."/>
            <person name="Ghim S.-Y."/>
            <person name="Glaser P."/>
            <person name="Goffeau A."/>
            <person name="Golightly E.J."/>
            <person name="Grandi G."/>
            <person name="Guiseppi G."/>
            <person name="Guy B.J."/>
            <person name="Haga K."/>
            <person name="Haiech J."/>
            <person name="Harwood C.R."/>
            <person name="Henaut A."/>
            <person name="Hilbert H."/>
            <person name="Holsappel S."/>
            <person name="Hosono S."/>
            <person name="Hullo M.-F."/>
            <person name="Itaya M."/>
            <person name="Jones L.-M."/>
            <person name="Joris B."/>
            <person name="Karamata D."/>
            <person name="Kasahara Y."/>
            <person name="Klaerr-Blanchard M."/>
            <person name="Klein C."/>
            <person name="Kobayashi Y."/>
            <person name="Koetter P."/>
            <person name="Koningstein G."/>
            <person name="Krogh S."/>
            <person name="Kumano M."/>
            <person name="Kurita K."/>
            <person name="Lapidus A."/>
            <person name="Lardinois S."/>
            <person name="Lauber J."/>
            <person name="Lazarevic V."/>
            <person name="Lee S.-M."/>
            <person name="Levine A."/>
            <person name="Liu H."/>
            <person name="Masuda S."/>
            <person name="Mauel C."/>
            <person name="Medigue C."/>
            <person name="Medina N."/>
            <person name="Mellado R.P."/>
            <person name="Mizuno M."/>
            <person name="Moestl D."/>
            <person name="Nakai S."/>
            <person name="Noback M."/>
            <person name="Noone D."/>
            <person name="O'Reilly M."/>
            <person name="Ogawa K."/>
            <person name="Ogiwara A."/>
            <person name="Oudega B."/>
            <person name="Park S.-H."/>
            <person name="Parro V."/>
            <person name="Pohl T.M."/>
            <person name="Portetelle D."/>
            <person name="Porwollik S."/>
            <person name="Prescott A.M."/>
            <person name="Presecan E."/>
            <person name="Pujic P."/>
            <person name="Purnelle B."/>
            <person name="Rapoport G."/>
            <person name="Rey M."/>
            <person name="Reynolds S."/>
            <person name="Rieger M."/>
            <person name="Rivolta C."/>
            <person name="Rocha E."/>
            <person name="Roche B."/>
            <person name="Rose M."/>
            <person name="Sadaie Y."/>
            <person name="Sato T."/>
            <person name="Scanlan E."/>
            <person name="Schleich S."/>
            <person name="Schroeter R."/>
            <person name="Scoffone F."/>
            <person name="Sekiguchi J."/>
            <person name="Sekowska A."/>
            <person name="Seror S.J."/>
            <person name="Serror P."/>
            <person name="Shin B.-S."/>
            <person name="Soldo B."/>
            <person name="Sorokin A."/>
            <person name="Tacconi E."/>
            <person name="Takagi T."/>
            <person name="Takahashi H."/>
            <person name="Takemaru K."/>
            <person name="Takeuchi M."/>
            <person name="Tamakoshi A."/>
            <person name="Tanaka T."/>
            <person name="Terpstra P."/>
            <person name="Tognoni A."/>
            <person name="Tosato V."/>
            <person name="Uchiyama S."/>
            <person name="Vandenbol M."/>
            <person name="Vannier F."/>
            <person name="Vassarotti A."/>
            <person name="Viari A."/>
            <person name="Wambutt R."/>
            <person name="Wedler E."/>
            <person name="Wedler H."/>
            <person name="Weitzenegger T."/>
            <person name="Winters P."/>
            <person name="Wipat A."/>
            <person name="Yamamoto H."/>
            <person name="Yamane K."/>
            <person name="Yasumoto K."/>
            <person name="Yata K."/>
            <person name="Yoshida K."/>
            <person name="Yoshikawa H.-F."/>
            <person name="Zumstein E."/>
            <person name="Yoshikawa H."/>
            <person name="Danchin A."/>
        </authorList>
    </citation>
    <scope>NUCLEOTIDE SEQUENCE [LARGE SCALE GENOMIC DNA]</scope>
    <source>
        <strain>168</strain>
    </source>
</reference>
<protein>
    <recommendedName>
        <fullName>SPbeta prophage-derived uncharacterized protein YomQ</fullName>
    </recommendedName>
</protein>
<organism>
    <name type="scientific">Bacillus subtilis (strain 168)</name>
    <dbReference type="NCBI Taxonomy" id="224308"/>
    <lineage>
        <taxon>Bacteria</taxon>
        <taxon>Bacillati</taxon>
        <taxon>Bacillota</taxon>
        <taxon>Bacilli</taxon>
        <taxon>Bacillales</taxon>
        <taxon>Bacillaceae</taxon>
        <taxon>Bacillus</taxon>
    </lineage>
</organism>
<accession>O31967</accession>
<keyword id="KW-1185">Reference proteome</keyword>
<feature type="chain" id="PRO_0000360453" description="SPbeta prophage-derived uncharacterized protein YomQ">
    <location>
        <begin position="1"/>
        <end position="116"/>
    </location>
</feature>
<dbReference type="EMBL" id="AL009126">
    <property type="protein sequence ID" value="CAB14044.1"/>
    <property type="molecule type" value="Genomic_DNA"/>
</dbReference>
<dbReference type="RefSeq" id="NP_390009.1">
    <property type="nucleotide sequence ID" value="NC_000964.3"/>
</dbReference>
<dbReference type="RefSeq" id="WP_004399254.1">
    <property type="nucleotide sequence ID" value="NZ_OZ025638.1"/>
</dbReference>
<dbReference type="SMR" id="O31967"/>
<dbReference type="FunCoup" id="O31967">
    <property type="interactions" value="102"/>
</dbReference>
<dbReference type="STRING" id="224308.BSU21260"/>
<dbReference type="PaxDb" id="224308-BSU21260"/>
<dbReference type="EnsemblBacteria" id="CAB14044">
    <property type="protein sequence ID" value="CAB14044"/>
    <property type="gene ID" value="BSU_21260"/>
</dbReference>
<dbReference type="GeneID" id="939142"/>
<dbReference type="KEGG" id="bsu:BSU21260"/>
<dbReference type="PATRIC" id="fig|224308.179.peg.2321"/>
<dbReference type="InParanoid" id="O31967"/>
<dbReference type="OrthoDB" id="2875985at2"/>
<dbReference type="BioCyc" id="BSUB:BSU21260-MONOMER"/>
<dbReference type="Proteomes" id="UP000001570">
    <property type="component" value="Chromosome"/>
</dbReference>
<name>YOMQ_BACSU</name>
<gene>
    <name type="primary">yomQ</name>
    <name type="ordered locus">BSU21260</name>
</gene>